<protein>
    <recommendedName>
        <fullName>Myocilin</fullName>
    </recommendedName>
    <alternativeName>
        <fullName>Myocilin 55 kDa subunit</fullName>
    </alternativeName>
    <alternativeName>
        <fullName>Trabecular meshwork-induced glucocorticoid response protein</fullName>
    </alternativeName>
    <component>
        <recommendedName>
            <fullName>Myocilin, N-terminal fragment</fullName>
        </recommendedName>
        <alternativeName>
            <fullName>Myocilin 20 kDa N-terminal fragment</fullName>
        </alternativeName>
    </component>
    <component>
        <recommendedName>
            <fullName>Myocilin, C-terminal fragment</fullName>
        </recommendedName>
        <alternativeName>
            <fullName>Myocilin 35 kDa N-terminal fragment</fullName>
        </alternativeName>
    </component>
</protein>
<comment type="function">
    <text evidence="2 4">Secreted glycoprotein regulating the activation of different signaling pathways in adjacent cells to control different processes including cell adhesion, cell-matrix adhesion, cytoskeleton organization and cell migration. Promotes substrate adhesion, spreading and formation of focal contacts. Negatively regulates cell-matrix adhesion and stress fiber assembly through Rho protein signal transduction. Modulates the organization of actin cytoskeleton by stimulating the formation of stress fibers through interactions with components of Wnt signaling pathways. Promotes cell migration through activation of PTK2 and the downstream phosphatidylinositol 3-kinase signaling. Plays a role in bone formation and promotes osteoblast differentiation in a dose-dependent manner through mitogen-activated protein kinase signaling. Mediates myelination in the peripheral nervous system through ERBB2/ERBB3 signaling. Plays a role as a regulator of muscle hypertrophy through the components of dystrophin-associated protein complex. Involved in positive regulation of mitochondrial depolarization. Plays a role in neurite outgrowth. May participate in the obstruction of fluid outflow in the trabecular meshwork.</text>
</comment>
<comment type="subunit">
    <text evidence="2 4">Homodimer (via N-terminus). Can also form higher oligomers. Interacts with OLFM3, FN1, NRCAM, GLDN and NFASC. Interacts (via N-terminus) with MYL2. Interacts with SFRP1, FRZB, FZD7, FZD10, FZD1 and WIF1; regulates Wnt signaling (By similarity). Interacts with SNTA1; regulates muscle hypertrophy. Interacts with ERBB2 and ERBB3; activates ERBB2-ERBB3 signaling pathway. Interacts with SNCG; affects its secretion and its aggregation (By similarity).</text>
</comment>
<comment type="subcellular location">
    <subcellularLocation>
        <location evidence="8">Secreted</location>
    </subcellularLocation>
    <subcellularLocation>
        <location evidence="4">Golgi apparatus</location>
    </subcellularLocation>
    <subcellularLocation>
        <location evidence="4">Cytoplasmic vesicle</location>
    </subcellularLocation>
    <subcellularLocation>
        <location evidence="4">Secreted</location>
        <location evidence="4">Extracellular space</location>
    </subcellularLocation>
    <subcellularLocation>
        <location evidence="4">Secreted</location>
        <location evidence="4">Extracellular space</location>
        <location evidence="4">Extracellular matrix</location>
    </subcellularLocation>
    <subcellularLocation>
        <location evidence="4">Secreted</location>
        <location evidence="4">Extracellular exosome</location>
    </subcellularLocation>
    <subcellularLocation>
        <location evidence="4">Mitochondrion</location>
    </subcellularLocation>
    <subcellularLocation>
        <location evidence="4">Mitochondrion intermembrane space</location>
    </subcellularLocation>
    <subcellularLocation>
        <location evidence="4">Mitochondrion inner membrane</location>
    </subcellularLocation>
    <subcellularLocation>
        <location evidence="4">Mitochondrion outer membrane</location>
    </subcellularLocation>
    <subcellularLocation>
        <location evidence="4">Rough endoplasmic reticulum</location>
    </subcellularLocation>
    <subcellularLocation>
        <location evidence="4">Cell projection</location>
    </subcellularLocation>
    <subcellularLocation>
        <location evidence="4">Cell projection</location>
        <location evidence="4">Cilium</location>
    </subcellularLocation>
    <text evidence="4">Located preferentially in the ciliary rootlet and basal body of the connecting cilium of photoreceptor cells, and in the rough endoplasmic reticulum. It is only imported to mitochondria in the trabecular meshwork. Localizes to the Golgi apparatus in Schlemm's canal endothelial cells. Appears in the extracellular space of trabecular meshwork cells by an unconventional mechanism, likely associated with exosome-like vesicles. Localizes in trabecular meshwork extracellular matrix.</text>
</comment>
<comment type="subcellular location">
    <molecule>Myocilin, C-terminal fragment</molecule>
    <subcellularLocation>
        <location evidence="1">Secreted</location>
    </subcellularLocation>
</comment>
<comment type="subcellular location">
    <molecule>Myocilin, N-terminal fragment</molecule>
    <subcellularLocation>
        <location>Endoplasmic reticulum</location>
    </subcellularLocation>
    <text evidence="1">Remains retained in the endoplasmic reticulum.</text>
</comment>
<comment type="tissue specificity">
    <text evidence="8">The myocilin 35 kDa fragment is detected in iris and ciliary body.</text>
</comment>
<comment type="PTM">
    <text evidence="3">Palmitoylated.</text>
</comment>
<comment type="PTM">
    <text evidence="1">Undergoes a calcium-dependent proteolytic cleavage at Gln-212 by CAPN2 in the endoplasmic reticulum. The result is the production of two fragments, one of 35 kDa containing the C-terminal olfactomedin-like domain, and another of 20 kDa containing the N-terminal leucine zipper-like domain (By similarity).</text>
</comment>
<comment type="PTM">
    <text evidence="4">Glycosylated.</text>
</comment>
<proteinExistence type="evidence at transcript level"/>
<accession>Q9XTA3</accession>
<accession>Q9TV76</accession>
<reference key="1">
    <citation type="journal article" date="2000" name="Invest. Ophthalmol. Vis. Sci.">
        <title>Molecular cloning of the bovine MYOC and induction of its expression in trabecular meshwork cells.</title>
        <authorList>
            <person name="Taniguchi F."/>
            <person name="Suzuki Y."/>
            <person name="Kurihara H."/>
            <person name="Kurihara Y."/>
            <person name="Kasai H."/>
            <person name="Shirato S."/>
            <person name="Araie M."/>
        </authorList>
    </citation>
    <scope>NUCLEOTIDE SEQUENCE [MRNA]</scope>
    <source>
        <tissue>Trabecular meshwork</tissue>
    </source>
</reference>
<reference key="2">
    <citation type="journal article" date="2005" name="J. Biol. Chem.">
        <title>Myocilin mutations causing glaucoma inhibit the intracellular endoproteolytic cleavage of myocilin between amino acids Arg226 and Ile227.</title>
        <authorList>
            <person name="Aroca-Aguilar J.D."/>
            <person name="Sanchez-Sanchez F."/>
            <person name="Ghosh S."/>
            <person name="Coca-Prados M."/>
            <person name="Escribano J."/>
        </authorList>
    </citation>
    <scope>TISSUE SPECIFICITY</scope>
    <scope>SUBCELLULAR LOCATION</scope>
</reference>
<gene>
    <name type="primary">MYOC</name>
    <name type="synonym">TIGR</name>
</gene>
<sequence length="490" mass="54886">MPAVQLLLLACLLGGVGARTAQFQKANDRSGRCQYTFSVASPSESSCPEQGQAMLAIQELQRDSSEQRATLESTKARLSSLEALLHRLTSGQPAGPLETHQGLQRELEALRREREQLETQTQELESAYSNLVRDKSALEEEKRRLQAENEDLARRLESSSQEVASLRRGQCPQAHSSSQDVPSGSREVAKWNLENMDFQELKSELTEVPASQILKESPSGHPRNEEGGTGCGELVWVGEPITLRTAETITGKYGVWMRDPRAAFPYTGETTWRIDTVGTDIRQVFEYDHIRKFTQGYPSKVHVLPRPLESTGAVVYRGSLYFQAAESRTVLRYDLRTETLKAEKEIPGAGYHGQFPYSWGGYTDIDLAVDEIGLWVIYSTEAAKGAIVLSKLNPETLELEQTWETNIRKQSVANAFIICGTLYTVSSYSSPDATVNFAYDTGTGSSKALTVPFKNRYKYSSMIDYNPLERKLFAWDNFNMVSYDIKLSRL</sequence>
<evidence type="ECO:0000250" key="1"/>
<evidence type="ECO:0000250" key="2">
    <source>
        <dbReference type="UniProtKB" id="O70624"/>
    </source>
</evidence>
<evidence type="ECO:0000250" key="3">
    <source>
        <dbReference type="UniProtKB" id="Q2PT31"/>
    </source>
</evidence>
<evidence type="ECO:0000250" key="4">
    <source>
        <dbReference type="UniProtKB" id="Q99972"/>
    </source>
</evidence>
<evidence type="ECO:0000255" key="5"/>
<evidence type="ECO:0000255" key="6">
    <source>
        <dbReference type="PROSITE-ProRule" id="PRU00446"/>
    </source>
</evidence>
<evidence type="ECO:0000256" key="7">
    <source>
        <dbReference type="SAM" id="MobiDB-lite"/>
    </source>
</evidence>
<evidence type="ECO:0000269" key="8">
    <source>
    </source>
</evidence>
<feature type="signal peptide" evidence="5">
    <location>
        <begin position="1"/>
        <end position="18"/>
    </location>
</feature>
<feature type="chain" id="PRO_0000020083" description="Myocilin">
    <location>
        <begin position="19"/>
        <end position="490"/>
    </location>
</feature>
<feature type="chain" id="PRO_0000428735" description="Myocilin, N-terminal fragment" evidence="1">
    <location>
        <begin position="19"/>
        <end position="212"/>
    </location>
</feature>
<feature type="chain" id="PRO_0000428736" description="Myocilin, C-terminal fragment" evidence="1">
    <location>
        <begin position="213"/>
        <end position="490"/>
    </location>
</feature>
<feature type="domain" description="Olfactomedin-like" evidence="6">
    <location>
        <begin position="230"/>
        <end position="489"/>
    </location>
</feature>
<feature type="region of interest" description="Disordered" evidence="7">
    <location>
        <begin position="152"/>
        <end position="186"/>
    </location>
</feature>
<feature type="coiled-coil region" evidence="5">
    <location>
        <begin position="51"/>
        <end position="170"/>
    </location>
</feature>
<feature type="short sequence motif" description="Microbody targeting signal" evidence="5">
    <location>
        <begin position="488"/>
        <end position="490"/>
    </location>
</feature>
<feature type="compositionally biased region" description="Polar residues" evidence="7">
    <location>
        <begin position="173"/>
        <end position="182"/>
    </location>
</feature>
<feature type="binding site" evidence="4">
    <location>
        <position position="366"/>
    </location>
    <ligand>
        <name>Ca(2+)</name>
        <dbReference type="ChEBI" id="CHEBI:29108"/>
    </ligand>
</feature>
<feature type="binding site" evidence="4">
    <location>
        <position position="414"/>
    </location>
    <ligand>
        <name>Ca(2+)</name>
        <dbReference type="ChEBI" id="CHEBI:29108"/>
    </ligand>
</feature>
<feature type="binding site" evidence="4">
    <location>
        <position position="415"/>
    </location>
    <ligand>
        <name>Ca(2+)</name>
        <dbReference type="ChEBI" id="CHEBI:29108"/>
    </ligand>
</feature>
<feature type="binding site" evidence="4">
    <location>
        <position position="463"/>
    </location>
    <ligand>
        <name>Ca(2+)</name>
        <dbReference type="ChEBI" id="CHEBI:29108"/>
    </ligand>
</feature>
<feature type="binding site" evidence="4">
    <location>
        <position position="464"/>
    </location>
    <ligand>
        <name>Ca(2+)</name>
        <dbReference type="ChEBI" id="CHEBI:29108"/>
    </ligand>
</feature>
<feature type="site" description="Cleavage; by CAPN2" evidence="1">
    <location>
        <begin position="212"/>
        <end position="213"/>
    </location>
</feature>
<feature type="disulfide bond" evidence="4 6">
    <location>
        <begin position="231"/>
        <end position="419"/>
    </location>
</feature>
<keyword id="KW-0106">Calcium</keyword>
<keyword id="KW-0966">Cell projection</keyword>
<keyword id="KW-0969">Cilium</keyword>
<keyword id="KW-0175">Coiled coil</keyword>
<keyword id="KW-0968">Cytoplasmic vesicle</keyword>
<keyword id="KW-1015">Disulfide bond</keyword>
<keyword id="KW-0256">Endoplasmic reticulum</keyword>
<keyword id="KW-0272">Extracellular matrix</keyword>
<keyword id="KW-0333">Golgi apparatus</keyword>
<keyword id="KW-0449">Lipoprotein</keyword>
<keyword id="KW-0472">Membrane</keyword>
<keyword id="KW-0479">Metal-binding</keyword>
<keyword id="KW-0496">Mitochondrion</keyword>
<keyword id="KW-0999">Mitochondrion inner membrane</keyword>
<keyword id="KW-1000">Mitochondrion outer membrane</keyword>
<keyword id="KW-0564">Palmitate</keyword>
<keyword id="KW-1185">Reference proteome</keyword>
<keyword id="KW-0964">Secreted</keyword>
<keyword id="KW-0732">Signal</keyword>
<dbReference type="EMBL" id="AB027758">
    <property type="protein sequence ID" value="BAA82152.1"/>
    <property type="molecule type" value="mRNA"/>
</dbReference>
<dbReference type="EMBL" id="AB018188">
    <property type="protein sequence ID" value="BAA77298.1"/>
    <property type="molecule type" value="mRNA"/>
</dbReference>
<dbReference type="SMR" id="Q9XTA3"/>
<dbReference type="FunCoup" id="Q9XTA3">
    <property type="interactions" value="36"/>
</dbReference>
<dbReference type="STRING" id="9913.ENSBTAP00000027111"/>
<dbReference type="PaxDb" id="9913-ENSBTAP00000027111"/>
<dbReference type="eggNOG" id="KOG3545">
    <property type="taxonomic scope" value="Eukaryota"/>
</dbReference>
<dbReference type="InParanoid" id="Q9XTA3"/>
<dbReference type="OrthoDB" id="8626508at2759"/>
<dbReference type="Proteomes" id="UP000009136">
    <property type="component" value="Unplaced"/>
</dbReference>
<dbReference type="GO" id="GO:0005929">
    <property type="term" value="C:cilium"/>
    <property type="evidence" value="ECO:0007669"/>
    <property type="project" value="UniProtKB-SubCell"/>
</dbReference>
<dbReference type="GO" id="GO:0062023">
    <property type="term" value="C:collagen-containing extracellular matrix"/>
    <property type="evidence" value="ECO:0000250"/>
    <property type="project" value="UniProtKB"/>
</dbReference>
<dbReference type="GO" id="GO:0031410">
    <property type="term" value="C:cytoplasmic vesicle"/>
    <property type="evidence" value="ECO:0000250"/>
    <property type="project" value="UniProtKB"/>
</dbReference>
<dbReference type="GO" id="GO:0005783">
    <property type="term" value="C:endoplasmic reticulum"/>
    <property type="evidence" value="ECO:0000250"/>
    <property type="project" value="UniProtKB"/>
</dbReference>
<dbReference type="GO" id="GO:0070062">
    <property type="term" value="C:extracellular exosome"/>
    <property type="evidence" value="ECO:0000250"/>
    <property type="project" value="UniProtKB"/>
</dbReference>
<dbReference type="GO" id="GO:0005615">
    <property type="term" value="C:extracellular space"/>
    <property type="evidence" value="ECO:0000318"/>
    <property type="project" value="GO_Central"/>
</dbReference>
<dbReference type="GO" id="GO:0005794">
    <property type="term" value="C:Golgi apparatus"/>
    <property type="evidence" value="ECO:0000250"/>
    <property type="project" value="UniProtKB"/>
</dbReference>
<dbReference type="GO" id="GO:0005743">
    <property type="term" value="C:mitochondrial inner membrane"/>
    <property type="evidence" value="ECO:0000250"/>
    <property type="project" value="UniProtKB"/>
</dbReference>
<dbReference type="GO" id="GO:0005758">
    <property type="term" value="C:mitochondrial intermembrane space"/>
    <property type="evidence" value="ECO:0000250"/>
    <property type="project" value="UniProtKB"/>
</dbReference>
<dbReference type="GO" id="GO:0005741">
    <property type="term" value="C:mitochondrial outer membrane"/>
    <property type="evidence" value="ECO:0000250"/>
    <property type="project" value="UniProtKB"/>
</dbReference>
<dbReference type="GO" id="GO:0033268">
    <property type="term" value="C:node of Ranvier"/>
    <property type="evidence" value="ECO:0000250"/>
    <property type="project" value="UniProtKB"/>
</dbReference>
<dbReference type="GO" id="GO:0005791">
    <property type="term" value="C:rough endoplasmic reticulum"/>
    <property type="evidence" value="ECO:0007669"/>
    <property type="project" value="UniProtKB-SubCell"/>
</dbReference>
<dbReference type="GO" id="GO:0046872">
    <property type="term" value="F:metal ion binding"/>
    <property type="evidence" value="ECO:0007669"/>
    <property type="project" value="UniProtKB-KW"/>
</dbReference>
<dbReference type="GO" id="GO:0060348">
    <property type="term" value="P:bone development"/>
    <property type="evidence" value="ECO:0000250"/>
    <property type="project" value="UniProtKB"/>
</dbReference>
<dbReference type="GO" id="GO:0045162">
    <property type="term" value="P:clustering of voltage-gated sodium channels"/>
    <property type="evidence" value="ECO:0000250"/>
    <property type="project" value="UniProtKB"/>
</dbReference>
<dbReference type="GO" id="GO:0038133">
    <property type="term" value="P:ERBB2-ERBB3 signaling pathway"/>
    <property type="evidence" value="ECO:0000250"/>
    <property type="project" value="UniProtKB"/>
</dbReference>
<dbReference type="GO" id="GO:0022011">
    <property type="term" value="P:myelination in peripheral nervous system"/>
    <property type="evidence" value="ECO:0000250"/>
    <property type="project" value="UniProtKB"/>
</dbReference>
<dbReference type="GO" id="GO:0001953">
    <property type="term" value="P:negative regulation of cell-matrix adhesion"/>
    <property type="evidence" value="ECO:0000250"/>
    <property type="project" value="UniProtKB"/>
</dbReference>
<dbReference type="GO" id="GO:0035024">
    <property type="term" value="P:negative regulation of Rho protein signal transduction"/>
    <property type="evidence" value="ECO:0000250"/>
    <property type="project" value="UniProtKB"/>
</dbReference>
<dbReference type="GO" id="GO:0051497">
    <property type="term" value="P:negative regulation of stress fiber assembly"/>
    <property type="evidence" value="ECO:0000250"/>
    <property type="project" value="UniProtKB"/>
</dbReference>
<dbReference type="GO" id="GO:0031175">
    <property type="term" value="P:neuron projection development"/>
    <property type="evidence" value="ECO:0000250"/>
    <property type="project" value="UniProtKB"/>
</dbReference>
<dbReference type="GO" id="GO:0035567">
    <property type="term" value="P:non-canonical Wnt signaling pathway"/>
    <property type="evidence" value="ECO:0000250"/>
    <property type="project" value="UniProtKB"/>
</dbReference>
<dbReference type="GO" id="GO:0001649">
    <property type="term" value="P:osteoblast differentiation"/>
    <property type="evidence" value="ECO:0000250"/>
    <property type="project" value="UniProtKB"/>
</dbReference>
<dbReference type="GO" id="GO:0030335">
    <property type="term" value="P:positive regulation of cell migration"/>
    <property type="evidence" value="ECO:0000250"/>
    <property type="project" value="UniProtKB"/>
</dbReference>
<dbReference type="GO" id="GO:0051894">
    <property type="term" value="P:positive regulation of focal adhesion assembly"/>
    <property type="evidence" value="ECO:0000250"/>
    <property type="project" value="UniProtKB"/>
</dbReference>
<dbReference type="GO" id="GO:0051901">
    <property type="term" value="P:positive regulation of mitochondrial depolarization"/>
    <property type="evidence" value="ECO:0000250"/>
    <property type="project" value="UniProtKB"/>
</dbReference>
<dbReference type="GO" id="GO:0051897">
    <property type="term" value="P:positive regulation of phosphatidylinositol 3-kinase/protein kinase B signal transduction"/>
    <property type="evidence" value="ECO:0000250"/>
    <property type="project" value="UniProtKB"/>
</dbReference>
<dbReference type="GO" id="GO:0051496">
    <property type="term" value="P:positive regulation of stress fiber assembly"/>
    <property type="evidence" value="ECO:0000250"/>
    <property type="project" value="UniProtKB"/>
</dbReference>
<dbReference type="GO" id="GO:1900026">
    <property type="term" value="P:positive regulation of substrate adhesion-dependent cell spreading"/>
    <property type="evidence" value="ECO:0000250"/>
    <property type="project" value="UniProtKB"/>
</dbReference>
<dbReference type="GO" id="GO:0043408">
    <property type="term" value="P:regulation of MAPK cascade"/>
    <property type="evidence" value="ECO:0000250"/>
    <property type="project" value="UniProtKB"/>
</dbReference>
<dbReference type="GO" id="GO:0007165">
    <property type="term" value="P:signal transduction"/>
    <property type="evidence" value="ECO:0000318"/>
    <property type="project" value="GO_Central"/>
</dbReference>
<dbReference type="GO" id="GO:0014734">
    <property type="term" value="P:skeletal muscle hypertrophy"/>
    <property type="evidence" value="ECO:0000250"/>
    <property type="project" value="UniProtKB"/>
</dbReference>
<dbReference type="FunFam" id="1.10.287.1490:FF:000059">
    <property type="entry name" value="Myocilin"/>
    <property type="match status" value="1"/>
</dbReference>
<dbReference type="Gene3D" id="1.10.287.1490">
    <property type="match status" value="1"/>
</dbReference>
<dbReference type="InterPro" id="IPR003112">
    <property type="entry name" value="Olfac-like_dom"/>
</dbReference>
<dbReference type="InterPro" id="IPR050605">
    <property type="entry name" value="Olfactomedin-like_domain"/>
</dbReference>
<dbReference type="PANTHER" id="PTHR23192:SF33">
    <property type="entry name" value="MYOCILIN"/>
    <property type="match status" value="1"/>
</dbReference>
<dbReference type="PANTHER" id="PTHR23192">
    <property type="entry name" value="OLFACTOMEDIN-RELATED"/>
    <property type="match status" value="1"/>
</dbReference>
<dbReference type="Pfam" id="PF02191">
    <property type="entry name" value="OLF"/>
    <property type="match status" value="1"/>
</dbReference>
<dbReference type="SMART" id="SM00284">
    <property type="entry name" value="OLF"/>
    <property type="match status" value="1"/>
</dbReference>
<dbReference type="SUPFAM" id="SSF90257">
    <property type="entry name" value="Myosin rod fragments"/>
    <property type="match status" value="1"/>
</dbReference>
<dbReference type="PROSITE" id="PS51132">
    <property type="entry name" value="OLF"/>
    <property type="match status" value="1"/>
</dbReference>
<name>MYOC_BOVIN</name>
<organism>
    <name type="scientific">Bos taurus</name>
    <name type="common">Bovine</name>
    <dbReference type="NCBI Taxonomy" id="9913"/>
    <lineage>
        <taxon>Eukaryota</taxon>
        <taxon>Metazoa</taxon>
        <taxon>Chordata</taxon>
        <taxon>Craniata</taxon>
        <taxon>Vertebrata</taxon>
        <taxon>Euteleostomi</taxon>
        <taxon>Mammalia</taxon>
        <taxon>Eutheria</taxon>
        <taxon>Laurasiatheria</taxon>
        <taxon>Artiodactyla</taxon>
        <taxon>Ruminantia</taxon>
        <taxon>Pecora</taxon>
        <taxon>Bovidae</taxon>
        <taxon>Bovinae</taxon>
        <taxon>Bos</taxon>
    </lineage>
</organism>